<proteinExistence type="inferred from homology"/>
<protein>
    <recommendedName>
        <fullName evidence="1">Phosphomevalonate dehydratase small subunit</fullName>
        <shortName evidence="1">PMDh small subunit</shortName>
        <shortName evidence="1">PMDh-S</shortName>
        <ecNumber evidence="1">4.2.1.182</ecNumber>
    </recommendedName>
</protein>
<dbReference type="EC" id="4.2.1.182" evidence="1"/>
<dbReference type="EMBL" id="CP001398">
    <property type="protein sequence ID" value="ACS33621.1"/>
    <property type="molecule type" value="Genomic_DNA"/>
</dbReference>
<dbReference type="RefSeq" id="WP_015858734.1">
    <property type="nucleotide sequence ID" value="NC_012804.1"/>
</dbReference>
<dbReference type="SMR" id="C5A5V9"/>
<dbReference type="STRING" id="593117.TGAM_1119"/>
<dbReference type="PaxDb" id="593117-TGAM_1119"/>
<dbReference type="GeneID" id="7986993"/>
<dbReference type="KEGG" id="tga:TGAM_1119"/>
<dbReference type="PATRIC" id="fig|593117.10.peg.1117"/>
<dbReference type="eggNOG" id="arCOG04279">
    <property type="taxonomic scope" value="Archaea"/>
</dbReference>
<dbReference type="HOGENOM" id="CLU_141583_2_0_2"/>
<dbReference type="OrthoDB" id="18062at2157"/>
<dbReference type="UniPathway" id="UPA00057"/>
<dbReference type="Proteomes" id="UP000001488">
    <property type="component" value="Chromosome"/>
</dbReference>
<dbReference type="GO" id="GO:0016836">
    <property type="term" value="F:hydro-lyase activity"/>
    <property type="evidence" value="ECO:0007669"/>
    <property type="project" value="UniProtKB-UniRule"/>
</dbReference>
<dbReference type="GO" id="GO:0019287">
    <property type="term" value="P:isopentenyl diphosphate biosynthetic process, mevalonate pathway"/>
    <property type="evidence" value="ECO:0007669"/>
    <property type="project" value="UniProtKB-UniRule"/>
</dbReference>
<dbReference type="CDD" id="cd01356">
    <property type="entry name" value="AcnX_swivel"/>
    <property type="match status" value="1"/>
</dbReference>
<dbReference type="Gene3D" id="3.50.30.10">
    <property type="entry name" value="Phosphohistidine domain"/>
    <property type="match status" value="1"/>
</dbReference>
<dbReference type="HAMAP" id="MF_00078">
    <property type="entry name" value="PMDh_S"/>
    <property type="match status" value="1"/>
</dbReference>
<dbReference type="InterPro" id="IPR012016">
    <property type="entry name" value="PMDh-S-like"/>
</dbReference>
<dbReference type="InterPro" id="IPR002840">
    <property type="entry name" value="PMDh-S-like_dom"/>
</dbReference>
<dbReference type="InterPro" id="IPR020794">
    <property type="entry name" value="PMDh_S"/>
</dbReference>
<dbReference type="NCBIfam" id="NF003046">
    <property type="entry name" value="PRK03955.1"/>
    <property type="match status" value="1"/>
</dbReference>
<dbReference type="PANTHER" id="PTHR36577">
    <property type="entry name" value="DUF521 DOMAIN PROTEIN (AFU_ORTHOLOGUE AFUA_6G00490)"/>
    <property type="match status" value="1"/>
</dbReference>
<dbReference type="PANTHER" id="PTHR36577:SF3">
    <property type="entry name" value="DUF521 DOMAIN PROTEIN (AFU_ORTHOLOGUE AFUA_6G00490)"/>
    <property type="match status" value="1"/>
</dbReference>
<dbReference type="Pfam" id="PF01989">
    <property type="entry name" value="AcnX_swivel_put"/>
    <property type="match status" value="1"/>
</dbReference>
<dbReference type="PIRSF" id="PIRSF004966">
    <property type="entry name" value="UCP004966"/>
    <property type="match status" value="1"/>
</dbReference>
<dbReference type="SUPFAM" id="SSF52016">
    <property type="entry name" value="LeuD/IlvD-like"/>
    <property type="match status" value="1"/>
</dbReference>
<sequence>MKLRGRKVVGGKAEGELIVSKKPLSFLGGVDPETGIVTDAESDIRGQSIAGKILAFPRGKGSTVGSYVIYALKKNGKAPKAIIVGEAETIVATGAIIAGIPMVQGIDVSKLKTGQRVRINADEGEVEVLDG</sequence>
<evidence type="ECO:0000255" key="1">
    <source>
        <dbReference type="HAMAP-Rule" id="MF_00078"/>
    </source>
</evidence>
<name>PMDHS_THEGJ</name>
<accession>C5A5V9</accession>
<feature type="chain" id="PRO_1000202525" description="Phosphomevalonate dehydratase small subunit">
    <location>
        <begin position="1"/>
        <end position="131"/>
    </location>
</feature>
<feature type="active site" description="Proton acceptor" evidence="1">
    <location>
        <position position="62"/>
    </location>
</feature>
<comment type="function">
    <text evidence="1">Component of a hydro-lyase that catalyzes the dehydration of mevalonate 5-phosphate (MVA5P) to form trans-anhydromevalonate 5-phosphate (tAHMP). Involved in the archaeal mevalonate (MVA) pathway, which provides fundamental precursors for isoprenoid biosynthesis, such as isopentenyl diphosphate (IPP) and dimethylallyl diphosphate (DMAPP).</text>
</comment>
<comment type="catalytic activity">
    <reaction evidence="1">
        <text>(R)-5-phosphomevalonate = (2E)-3-methyl-5-phosphooxypent-2-enoate + H2O</text>
        <dbReference type="Rhea" id="RHEA:78975"/>
        <dbReference type="ChEBI" id="CHEBI:15377"/>
        <dbReference type="ChEBI" id="CHEBI:58146"/>
        <dbReference type="ChEBI" id="CHEBI:229665"/>
        <dbReference type="EC" id="4.2.1.182"/>
    </reaction>
    <physiologicalReaction direction="left-to-right" evidence="1">
        <dbReference type="Rhea" id="RHEA:78976"/>
    </physiologicalReaction>
</comment>
<comment type="pathway">
    <text evidence="1">Isoprenoid biosynthesis; isopentenyl diphosphate biosynthesis via mevalonate pathway.</text>
</comment>
<comment type="subunit">
    <text evidence="1">Heterodimer composed of a large subunit (PMDh-L) and a small subunit (PMDh-S).</text>
</comment>
<comment type="similarity">
    <text evidence="1">Belongs to the AcnX type II small subunit family.</text>
</comment>
<gene>
    <name type="ordered locus">TGAM_1119</name>
</gene>
<reference key="1">
    <citation type="journal article" date="2007" name="Genome Biol.">
        <title>Genome analysis and genome-wide proteomics of Thermococcus gammatolerans, the most radioresistant organism known amongst the Archaea.</title>
        <authorList>
            <person name="Zivanovic Y."/>
            <person name="Armengaud J."/>
            <person name="Lagorce A."/>
            <person name="Leplat C."/>
            <person name="Guerin P."/>
            <person name="Dutertre M."/>
            <person name="Anthouard V."/>
            <person name="Forterre P."/>
            <person name="Wincker P."/>
            <person name="Confalonieri F."/>
        </authorList>
    </citation>
    <scope>NUCLEOTIDE SEQUENCE [LARGE SCALE GENOMIC DNA]</scope>
    <source>
        <strain>DSM 15229 / JCM 11827 / EJ3</strain>
    </source>
</reference>
<organism>
    <name type="scientific">Thermococcus gammatolerans (strain DSM 15229 / JCM 11827 / EJ3)</name>
    <dbReference type="NCBI Taxonomy" id="593117"/>
    <lineage>
        <taxon>Archaea</taxon>
        <taxon>Methanobacteriati</taxon>
        <taxon>Methanobacteriota</taxon>
        <taxon>Thermococci</taxon>
        <taxon>Thermococcales</taxon>
        <taxon>Thermococcaceae</taxon>
        <taxon>Thermococcus</taxon>
    </lineage>
</organism>
<keyword id="KW-0414">Isoprene biosynthesis</keyword>
<keyword id="KW-0456">Lyase</keyword>
<keyword id="KW-1185">Reference proteome</keyword>